<evidence type="ECO:0000255" key="1">
    <source>
        <dbReference type="HAMAP-Rule" id="MF_00406"/>
    </source>
</evidence>
<proteinExistence type="inferred from homology"/>
<keyword id="KW-0963">Cytoplasm</keyword>
<keyword id="KW-0441">Lipid A biosynthesis</keyword>
<keyword id="KW-0444">Lipid biosynthesis</keyword>
<keyword id="KW-0443">Lipid metabolism</keyword>
<keyword id="KW-0456">Lyase</keyword>
<dbReference type="EC" id="4.2.1.59" evidence="1"/>
<dbReference type="EMBL" id="CP000766">
    <property type="protein sequence ID" value="ABY71940.1"/>
    <property type="molecule type" value="Genomic_DNA"/>
</dbReference>
<dbReference type="RefSeq" id="WP_004997000.1">
    <property type="nucleotide sequence ID" value="NC_010263.3"/>
</dbReference>
<dbReference type="SMR" id="B0BVR4"/>
<dbReference type="GeneID" id="95361756"/>
<dbReference type="KEGG" id="rrj:RrIowa_0008"/>
<dbReference type="eggNOG" id="COG0764">
    <property type="taxonomic scope" value="Bacteria"/>
</dbReference>
<dbReference type="HOGENOM" id="CLU_078912_1_2_5"/>
<dbReference type="Proteomes" id="UP000000796">
    <property type="component" value="Chromosome"/>
</dbReference>
<dbReference type="GO" id="GO:0005737">
    <property type="term" value="C:cytoplasm"/>
    <property type="evidence" value="ECO:0007669"/>
    <property type="project" value="UniProtKB-SubCell"/>
</dbReference>
<dbReference type="GO" id="GO:0016020">
    <property type="term" value="C:membrane"/>
    <property type="evidence" value="ECO:0007669"/>
    <property type="project" value="GOC"/>
</dbReference>
<dbReference type="GO" id="GO:0019171">
    <property type="term" value="F:(3R)-hydroxyacyl-[acyl-carrier-protein] dehydratase activity"/>
    <property type="evidence" value="ECO:0007669"/>
    <property type="project" value="UniProtKB-EC"/>
</dbReference>
<dbReference type="GO" id="GO:0006633">
    <property type="term" value="P:fatty acid biosynthetic process"/>
    <property type="evidence" value="ECO:0007669"/>
    <property type="project" value="UniProtKB-UniRule"/>
</dbReference>
<dbReference type="GO" id="GO:0009245">
    <property type="term" value="P:lipid A biosynthetic process"/>
    <property type="evidence" value="ECO:0007669"/>
    <property type="project" value="UniProtKB-UniRule"/>
</dbReference>
<dbReference type="CDD" id="cd01288">
    <property type="entry name" value="FabZ"/>
    <property type="match status" value="1"/>
</dbReference>
<dbReference type="FunFam" id="3.10.129.10:FF:000001">
    <property type="entry name" value="3-hydroxyacyl-[acyl-carrier-protein] dehydratase FabZ"/>
    <property type="match status" value="1"/>
</dbReference>
<dbReference type="Gene3D" id="3.10.129.10">
    <property type="entry name" value="Hotdog Thioesterase"/>
    <property type="match status" value="1"/>
</dbReference>
<dbReference type="HAMAP" id="MF_00406">
    <property type="entry name" value="FabZ"/>
    <property type="match status" value="1"/>
</dbReference>
<dbReference type="InterPro" id="IPR013114">
    <property type="entry name" value="FabA_FabZ"/>
</dbReference>
<dbReference type="InterPro" id="IPR010084">
    <property type="entry name" value="FabZ"/>
</dbReference>
<dbReference type="InterPro" id="IPR029069">
    <property type="entry name" value="HotDog_dom_sf"/>
</dbReference>
<dbReference type="NCBIfam" id="TIGR01750">
    <property type="entry name" value="fabZ"/>
    <property type="match status" value="1"/>
</dbReference>
<dbReference type="NCBIfam" id="NF000582">
    <property type="entry name" value="PRK00006.1"/>
    <property type="match status" value="1"/>
</dbReference>
<dbReference type="PANTHER" id="PTHR30272">
    <property type="entry name" value="3-HYDROXYACYL-[ACYL-CARRIER-PROTEIN] DEHYDRATASE"/>
    <property type="match status" value="1"/>
</dbReference>
<dbReference type="PANTHER" id="PTHR30272:SF1">
    <property type="entry name" value="3-HYDROXYACYL-[ACYL-CARRIER-PROTEIN] DEHYDRATASE"/>
    <property type="match status" value="1"/>
</dbReference>
<dbReference type="Pfam" id="PF07977">
    <property type="entry name" value="FabA"/>
    <property type="match status" value="1"/>
</dbReference>
<dbReference type="SUPFAM" id="SSF54637">
    <property type="entry name" value="Thioesterase/thiol ester dehydrase-isomerase"/>
    <property type="match status" value="1"/>
</dbReference>
<protein>
    <recommendedName>
        <fullName evidence="1">3-hydroxyacyl-[acyl-carrier-protein] dehydratase FabZ</fullName>
        <ecNumber evidence="1">4.2.1.59</ecNumber>
    </recommendedName>
    <alternativeName>
        <fullName evidence="1">(3R)-hydroxymyristoyl-[acyl-carrier-protein] dehydratase</fullName>
        <shortName evidence="1">(3R)-hydroxymyristoyl-ACP dehydrase</shortName>
    </alternativeName>
    <alternativeName>
        <fullName evidence="1">Beta-hydroxyacyl-ACP dehydratase</fullName>
    </alternativeName>
</protein>
<reference key="1">
    <citation type="journal article" date="2008" name="Infect. Immun.">
        <title>Genomic comparison of virulent Rickettsia rickettsii Sheila Smith and avirulent Rickettsia rickettsii Iowa.</title>
        <authorList>
            <person name="Ellison D.W."/>
            <person name="Clark T.R."/>
            <person name="Sturdevant D.E."/>
            <person name="Virtaneva K."/>
            <person name="Porcella S.F."/>
            <person name="Hackstadt T."/>
        </authorList>
    </citation>
    <scope>NUCLEOTIDE SEQUENCE [LARGE SCALE GENOMIC DNA]</scope>
    <source>
        <strain>Iowa</strain>
    </source>
</reference>
<gene>
    <name evidence="1" type="primary">fabZ</name>
    <name type="ordered locus">RrIowa_0008</name>
</gene>
<feature type="chain" id="PRO_1000080444" description="3-hydroxyacyl-[acyl-carrier-protein] dehydratase FabZ">
    <location>
        <begin position="1"/>
        <end position="145"/>
    </location>
</feature>
<feature type="active site" evidence="1">
    <location>
        <position position="49"/>
    </location>
</feature>
<accession>B0BVR4</accession>
<organism>
    <name type="scientific">Rickettsia rickettsii (strain Iowa)</name>
    <dbReference type="NCBI Taxonomy" id="452659"/>
    <lineage>
        <taxon>Bacteria</taxon>
        <taxon>Pseudomonadati</taxon>
        <taxon>Pseudomonadota</taxon>
        <taxon>Alphaproteobacteria</taxon>
        <taxon>Rickettsiales</taxon>
        <taxon>Rickettsiaceae</taxon>
        <taxon>Rickettsieae</taxon>
        <taxon>Rickettsia</taxon>
        <taxon>spotted fever group</taxon>
    </lineage>
</organism>
<comment type="function">
    <text evidence="1">Involved in unsaturated fatty acids biosynthesis. Catalyzes the dehydration of short chain beta-hydroxyacyl-ACPs and long chain saturated and unsaturated beta-hydroxyacyl-ACPs.</text>
</comment>
<comment type="catalytic activity">
    <reaction evidence="1">
        <text>a (3R)-hydroxyacyl-[ACP] = a (2E)-enoyl-[ACP] + H2O</text>
        <dbReference type="Rhea" id="RHEA:13097"/>
        <dbReference type="Rhea" id="RHEA-COMP:9925"/>
        <dbReference type="Rhea" id="RHEA-COMP:9945"/>
        <dbReference type="ChEBI" id="CHEBI:15377"/>
        <dbReference type="ChEBI" id="CHEBI:78784"/>
        <dbReference type="ChEBI" id="CHEBI:78827"/>
        <dbReference type="EC" id="4.2.1.59"/>
    </reaction>
</comment>
<comment type="subcellular location">
    <subcellularLocation>
        <location evidence="1">Cytoplasm</location>
    </subcellularLocation>
</comment>
<comment type="similarity">
    <text evidence="1">Belongs to the thioester dehydratase family. FabZ subfamily.</text>
</comment>
<name>FABZ_RICRO</name>
<sequence>MIIDITEIMDWIPHRYPFLLVDRVLKIDPNKSITGIKNVTVNEPQFTGHFPARPVMPGVLMVEAMAQLAAILVAKSLGSTKNKEVFLMTIENAKFRRIVQPGDTMHIHAVIDQQRANVWKFSSTVTVEGEIAAESKFTAMIKDKT</sequence>